<evidence type="ECO:0000255" key="1">
    <source>
        <dbReference type="HAMAP-Rule" id="MF_01633"/>
    </source>
</evidence>
<comment type="function">
    <text evidence="1">Catalyzes the ATP-dependent conversion of 7-carboxy-7-deazaguanine (CDG) to 7-cyano-7-deazaguanine (preQ(0)).</text>
</comment>
<comment type="catalytic activity">
    <reaction evidence="1">
        <text>7-carboxy-7-deazaguanine + NH4(+) + ATP = 7-cyano-7-deazaguanine + ADP + phosphate + H2O + H(+)</text>
        <dbReference type="Rhea" id="RHEA:27982"/>
        <dbReference type="ChEBI" id="CHEBI:15377"/>
        <dbReference type="ChEBI" id="CHEBI:15378"/>
        <dbReference type="ChEBI" id="CHEBI:28938"/>
        <dbReference type="ChEBI" id="CHEBI:30616"/>
        <dbReference type="ChEBI" id="CHEBI:43474"/>
        <dbReference type="ChEBI" id="CHEBI:45075"/>
        <dbReference type="ChEBI" id="CHEBI:61036"/>
        <dbReference type="ChEBI" id="CHEBI:456216"/>
        <dbReference type="EC" id="6.3.4.20"/>
    </reaction>
</comment>
<comment type="cofactor">
    <cofactor evidence="1">
        <name>Zn(2+)</name>
        <dbReference type="ChEBI" id="CHEBI:29105"/>
    </cofactor>
    <text evidence="1">Binds 1 zinc ion per subunit.</text>
</comment>
<comment type="pathway">
    <text evidence="1">Purine metabolism; 7-cyano-7-deazaguanine biosynthesis.</text>
</comment>
<comment type="similarity">
    <text evidence="1">Belongs to the QueC family.</text>
</comment>
<reference key="1">
    <citation type="journal article" date="2009" name="BMC Genomics">
        <title>Metabolic analysis of the soil microbe Dechloromonas aromatica str. RCB: indications of a surprisingly complex life-style and cryptic anaerobic pathways for aromatic degradation.</title>
        <authorList>
            <person name="Salinero K.K."/>
            <person name="Keller K."/>
            <person name="Feil W.S."/>
            <person name="Feil H."/>
            <person name="Trong S."/>
            <person name="Di Bartolo G."/>
            <person name="Lapidus A."/>
        </authorList>
    </citation>
    <scope>NUCLEOTIDE SEQUENCE [LARGE SCALE GENOMIC DNA]</scope>
    <source>
        <strain>RCB</strain>
    </source>
</reference>
<protein>
    <recommendedName>
        <fullName evidence="1">7-cyano-7-deazaguanine synthase</fullName>
        <ecNumber evidence="1">6.3.4.20</ecNumber>
    </recommendedName>
    <alternativeName>
        <fullName evidence="1">7-cyano-7-carbaguanine synthase</fullName>
    </alternativeName>
    <alternativeName>
        <fullName evidence="1">PreQ(0) synthase</fullName>
    </alternativeName>
    <alternativeName>
        <fullName evidence="1">Queuosine biosynthesis protein QueC</fullName>
    </alternativeName>
</protein>
<sequence length="225" mass="23697">MMKKAVVLLSGGLDSATCLAIARSQGFESYCLSFNYGQRHCAELVAADRVVKALGAAEHRVLNFGLAQFGGSALTDTNIAVPTEGVQPGIPVTYVPARNTIMLSLALAWAEVLGSRDIFVGVNAVDYSGYPDCRPEYIAAFETMANLATKAGVEGHKLSIHAPLIDLSKAEIIRTGAALGVDYSLTVSCYQADEQGRACGVCDSCRLRAEGFAAAGLADPTLYRA</sequence>
<feature type="chain" id="PRO_0000246834" description="7-cyano-7-deazaguanine synthase">
    <location>
        <begin position="1"/>
        <end position="225"/>
    </location>
</feature>
<feature type="binding site" evidence="1">
    <location>
        <begin position="9"/>
        <end position="19"/>
    </location>
    <ligand>
        <name>ATP</name>
        <dbReference type="ChEBI" id="CHEBI:30616"/>
    </ligand>
</feature>
<feature type="binding site" evidence="1">
    <location>
        <position position="189"/>
    </location>
    <ligand>
        <name>Zn(2+)</name>
        <dbReference type="ChEBI" id="CHEBI:29105"/>
    </ligand>
</feature>
<feature type="binding site" evidence="1">
    <location>
        <position position="199"/>
    </location>
    <ligand>
        <name>Zn(2+)</name>
        <dbReference type="ChEBI" id="CHEBI:29105"/>
    </ligand>
</feature>
<feature type="binding site" evidence="1">
    <location>
        <position position="202"/>
    </location>
    <ligand>
        <name>Zn(2+)</name>
        <dbReference type="ChEBI" id="CHEBI:29105"/>
    </ligand>
</feature>
<feature type="binding site" evidence="1">
    <location>
        <position position="205"/>
    </location>
    <ligand>
        <name>Zn(2+)</name>
        <dbReference type="ChEBI" id="CHEBI:29105"/>
    </ligand>
</feature>
<gene>
    <name evidence="1" type="primary">queC</name>
    <name type="ordered locus">Daro_4042</name>
</gene>
<proteinExistence type="inferred from homology"/>
<name>QUEC_DECAR</name>
<keyword id="KW-0067">ATP-binding</keyword>
<keyword id="KW-0436">Ligase</keyword>
<keyword id="KW-0479">Metal-binding</keyword>
<keyword id="KW-0547">Nucleotide-binding</keyword>
<keyword id="KW-0671">Queuosine biosynthesis</keyword>
<keyword id="KW-0862">Zinc</keyword>
<organism>
    <name type="scientific">Dechloromonas aromatica (strain RCB)</name>
    <dbReference type="NCBI Taxonomy" id="159087"/>
    <lineage>
        <taxon>Bacteria</taxon>
        <taxon>Pseudomonadati</taxon>
        <taxon>Pseudomonadota</taxon>
        <taxon>Betaproteobacteria</taxon>
        <taxon>Rhodocyclales</taxon>
        <taxon>Azonexaceae</taxon>
        <taxon>Dechloromonas</taxon>
    </lineage>
</organism>
<accession>Q478G3</accession>
<dbReference type="EC" id="6.3.4.20" evidence="1"/>
<dbReference type="EMBL" id="CP000089">
    <property type="protein sequence ID" value="AAZ48768.1"/>
    <property type="molecule type" value="Genomic_DNA"/>
</dbReference>
<dbReference type="SMR" id="Q478G3"/>
<dbReference type="STRING" id="159087.Daro_4042"/>
<dbReference type="KEGG" id="dar:Daro_4042"/>
<dbReference type="eggNOG" id="COG0603">
    <property type="taxonomic scope" value="Bacteria"/>
</dbReference>
<dbReference type="HOGENOM" id="CLU_081854_1_1_4"/>
<dbReference type="OrthoDB" id="9789567at2"/>
<dbReference type="UniPathway" id="UPA00391"/>
<dbReference type="GO" id="GO:0005524">
    <property type="term" value="F:ATP binding"/>
    <property type="evidence" value="ECO:0007669"/>
    <property type="project" value="UniProtKB-UniRule"/>
</dbReference>
<dbReference type="GO" id="GO:0016879">
    <property type="term" value="F:ligase activity, forming carbon-nitrogen bonds"/>
    <property type="evidence" value="ECO:0007669"/>
    <property type="project" value="UniProtKB-UniRule"/>
</dbReference>
<dbReference type="GO" id="GO:0008270">
    <property type="term" value="F:zinc ion binding"/>
    <property type="evidence" value="ECO:0007669"/>
    <property type="project" value="UniProtKB-UniRule"/>
</dbReference>
<dbReference type="GO" id="GO:0008616">
    <property type="term" value="P:queuosine biosynthetic process"/>
    <property type="evidence" value="ECO:0007669"/>
    <property type="project" value="UniProtKB-UniRule"/>
</dbReference>
<dbReference type="CDD" id="cd01995">
    <property type="entry name" value="QueC-like"/>
    <property type="match status" value="1"/>
</dbReference>
<dbReference type="FunFam" id="3.40.50.620:FF:000131">
    <property type="entry name" value="7-cyano-7-deazaguanine synthase"/>
    <property type="match status" value="1"/>
</dbReference>
<dbReference type="Gene3D" id="3.40.50.620">
    <property type="entry name" value="HUPs"/>
    <property type="match status" value="1"/>
</dbReference>
<dbReference type="HAMAP" id="MF_01633">
    <property type="entry name" value="QueC"/>
    <property type="match status" value="1"/>
</dbReference>
<dbReference type="InterPro" id="IPR018317">
    <property type="entry name" value="QueC"/>
</dbReference>
<dbReference type="InterPro" id="IPR014729">
    <property type="entry name" value="Rossmann-like_a/b/a_fold"/>
</dbReference>
<dbReference type="NCBIfam" id="TIGR00364">
    <property type="entry name" value="7-cyano-7-deazaguanine synthase QueC"/>
    <property type="match status" value="1"/>
</dbReference>
<dbReference type="PANTHER" id="PTHR42914">
    <property type="entry name" value="7-CYANO-7-DEAZAGUANINE SYNTHASE"/>
    <property type="match status" value="1"/>
</dbReference>
<dbReference type="PANTHER" id="PTHR42914:SF1">
    <property type="entry name" value="7-CYANO-7-DEAZAGUANINE SYNTHASE"/>
    <property type="match status" value="1"/>
</dbReference>
<dbReference type="Pfam" id="PF06508">
    <property type="entry name" value="QueC"/>
    <property type="match status" value="1"/>
</dbReference>
<dbReference type="PIRSF" id="PIRSF006293">
    <property type="entry name" value="ExsB"/>
    <property type="match status" value="1"/>
</dbReference>
<dbReference type="SUPFAM" id="SSF52402">
    <property type="entry name" value="Adenine nucleotide alpha hydrolases-like"/>
    <property type="match status" value="1"/>
</dbReference>